<sequence length="198" mass="20944">MESNNNNLNLDMEKDQETTFDYSKRAQWLRAAVLGANDGLVSTASLMMGIGAVKQDVRIMLLTGFAGLVAGACSMAIGEFISVYSQYDIEVAQMKRESGGETKKEKLPSPTQAAIASALAFTLGAIVPLLAAAFVKEYKVRIGVIVAAVTLALVMFGWLGAVLGKAPVVKSLVRVLIGGWLAMAITFGFTKLVGSHGL</sequence>
<gene>
    <name evidence="6" type="ordered locus">At3g43660</name>
    <name evidence="7" type="ORF">F23N14.40</name>
</gene>
<comment type="function">
    <text evidence="1">Probable vacuolar iron transporter that may be involved in the regulation of iron distribution throughout the plant.</text>
</comment>
<comment type="catalytic activity">
    <reaction evidence="1">
        <text>Fe(2+)(in) = Fe(2+)(out)</text>
        <dbReference type="Rhea" id="RHEA:28486"/>
        <dbReference type="ChEBI" id="CHEBI:29033"/>
    </reaction>
    <physiologicalReaction direction="left-to-right" evidence="5">
        <dbReference type="Rhea" id="RHEA:28487"/>
    </physiologicalReaction>
</comment>
<comment type="subcellular location">
    <subcellularLocation>
        <location evidence="1">Vacuole membrane</location>
        <topology evidence="2">Multi-pass membrane protein</topology>
    </subcellularLocation>
</comment>
<comment type="induction">
    <text evidence="3">Not down-regulated under iron deficiency.</text>
</comment>
<comment type="similarity">
    <text evidence="5">Belongs to the CCC1 family.</text>
</comment>
<organism>
    <name type="scientific">Arabidopsis thaliana</name>
    <name type="common">Mouse-ear cress</name>
    <dbReference type="NCBI Taxonomy" id="3702"/>
    <lineage>
        <taxon>Eukaryota</taxon>
        <taxon>Viridiplantae</taxon>
        <taxon>Streptophyta</taxon>
        <taxon>Embryophyta</taxon>
        <taxon>Tracheophyta</taxon>
        <taxon>Spermatophyta</taxon>
        <taxon>Magnoliopsida</taxon>
        <taxon>eudicotyledons</taxon>
        <taxon>Gunneridae</taxon>
        <taxon>Pentapetalae</taxon>
        <taxon>rosids</taxon>
        <taxon>malvids</taxon>
        <taxon>Brassicales</taxon>
        <taxon>Brassicaceae</taxon>
        <taxon>Camelineae</taxon>
        <taxon>Arabidopsis</taxon>
    </lineage>
</organism>
<accession>Q9M2C0</accession>
<reference key="1">
    <citation type="journal article" date="2000" name="Nature">
        <title>Sequence and analysis of chromosome 3 of the plant Arabidopsis thaliana.</title>
        <authorList>
            <person name="Salanoubat M."/>
            <person name="Lemcke K."/>
            <person name="Rieger M."/>
            <person name="Ansorge W."/>
            <person name="Unseld M."/>
            <person name="Fartmann B."/>
            <person name="Valle G."/>
            <person name="Bloecker H."/>
            <person name="Perez-Alonso M."/>
            <person name="Obermaier B."/>
            <person name="Delseny M."/>
            <person name="Boutry M."/>
            <person name="Grivell L.A."/>
            <person name="Mache R."/>
            <person name="Puigdomenech P."/>
            <person name="De Simone V."/>
            <person name="Choisne N."/>
            <person name="Artiguenave F."/>
            <person name="Robert C."/>
            <person name="Brottier P."/>
            <person name="Wincker P."/>
            <person name="Cattolico L."/>
            <person name="Weissenbach J."/>
            <person name="Saurin W."/>
            <person name="Quetier F."/>
            <person name="Schaefer M."/>
            <person name="Mueller-Auer S."/>
            <person name="Gabel C."/>
            <person name="Fuchs M."/>
            <person name="Benes V."/>
            <person name="Wurmbach E."/>
            <person name="Drzonek H."/>
            <person name="Erfle H."/>
            <person name="Jordan N."/>
            <person name="Bangert S."/>
            <person name="Wiedelmann R."/>
            <person name="Kranz H."/>
            <person name="Voss H."/>
            <person name="Holland R."/>
            <person name="Brandt P."/>
            <person name="Nyakatura G."/>
            <person name="Vezzi A."/>
            <person name="D'Angelo M."/>
            <person name="Pallavicini A."/>
            <person name="Toppo S."/>
            <person name="Simionati B."/>
            <person name="Conrad A."/>
            <person name="Hornischer K."/>
            <person name="Kauer G."/>
            <person name="Loehnert T.-H."/>
            <person name="Nordsiek G."/>
            <person name="Reichelt J."/>
            <person name="Scharfe M."/>
            <person name="Schoen O."/>
            <person name="Bargues M."/>
            <person name="Terol J."/>
            <person name="Climent J."/>
            <person name="Navarro P."/>
            <person name="Collado C."/>
            <person name="Perez-Perez A."/>
            <person name="Ottenwaelder B."/>
            <person name="Duchemin D."/>
            <person name="Cooke R."/>
            <person name="Laudie M."/>
            <person name="Berger-Llauro C."/>
            <person name="Purnelle B."/>
            <person name="Masuy D."/>
            <person name="de Haan M."/>
            <person name="Maarse A.C."/>
            <person name="Alcaraz J.-P."/>
            <person name="Cottet A."/>
            <person name="Casacuberta E."/>
            <person name="Monfort A."/>
            <person name="Argiriou A."/>
            <person name="Flores M."/>
            <person name="Liguori R."/>
            <person name="Vitale D."/>
            <person name="Mannhaupt G."/>
            <person name="Haase D."/>
            <person name="Schoof H."/>
            <person name="Rudd S."/>
            <person name="Zaccaria P."/>
            <person name="Mewes H.-W."/>
            <person name="Mayer K.F.X."/>
            <person name="Kaul S."/>
            <person name="Town C.D."/>
            <person name="Koo H.L."/>
            <person name="Tallon L.J."/>
            <person name="Jenkins J."/>
            <person name="Rooney T."/>
            <person name="Rizzo M."/>
            <person name="Walts A."/>
            <person name="Utterback T."/>
            <person name="Fujii C.Y."/>
            <person name="Shea T.P."/>
            <person name="Creasy T.H."/>
            <person name="Haas B."/>
            <person name="Maiti R."/>
            <person name="Wu D."/>
            <person name="Peterson J."/>
            <person name="Van Aken S."/>
            <person name="Pai G."/>
            <person name="Militscher J."/>
            <person name="Sellers P."/>
            <person name="Gill J.E."/>
            <person name="Feldblyum T.V."/>
            <person name="Preuss D."/>
            <person name="Lin X."/>
            <person name="Nierman W.C."/>
            <person name="Salzberg S.L."/>
            <person name="White O."/>
            <person name="Venter J.C."/>
            <person name="Fraser C.M."/>
            <person name="Kaneko T."/>
            <person name="Nakamura Y."/>
            <person name="Sato S."/>
            <person name="Kato T."/>
            <person name="Asamizu E."/>
            <person name="Sasamoto S."/>
            <person name="Kimura T."/>
            <person name="Idesawa K."/>
            <person name="Kawashima K."/>
            <person name="Kishida Y."/>
            <person name="Kiyokawa C."/>
            <person name="Kohara M."/>
            <person name="Matsumoto M."/>
            <person name="Matsuno A."/>
            <person name="Muraki A."/>
            <person name="Nakayama S."/>
            <person name="Nakazaki N."/>
            <person name="Shinpo S."/>
            <person name="Takeuchi C."/>
            <person name="Wada T."/>
            <person name="Watanabe A."/>
            <person name="Yamada M."/>
            <person name="Yasuda M."/>
            <person name="Tabata S."/>
        </authorList>
    </citation>
    <scope>NUCLEOTIDE SEQUENCE [LARGE SCALE GENOMIC DNA]</scope>
    <source>
        <strain>cv. Columbia</strain>
    </source>
</reference>
<reference key="2">
    <citation type="journal article" date="2017" name="Plant J.">
        <title>Araport11: a complete reannotation of the Arabidopsis thaliana reference genome.</title>
        <authorList>
            <person name="Cheng C.Y."/>
            <person name="Krishnakumar V."/>
            <person name="Chan A.P."/>
            <person name="Thibaud-Nissen F."/>
            <person name="Schobel S."/>
            <person name="Town C.D."/>
        </authorList>
    </citation>
    <scope>GENOME REANNOTATION</scope>
    <source>
        <strain>cv. Columbia</strain>
    </source>
</reference>
<reference key="3">
    <citation type="journal article" date="2003" name="Science">
        <title>Empirical analysis of transcriptional activity in the Arabidopsis genome.</title>
        <authorList>
            <person name="Yamada K."/>
            <person name="Lim J."/>
            <person name="Dale J.M."/>
            <person name="Chen H."/>
            <person name="Shinn P."/>
            <person name="Palm C.J."/>
            <person name="Southwick A.M."/>
            <person name="Wu H.C."/>
            <person name="Kim C.J."/>
            <person name="Nguyen M."/>
            <person name="Pham P.K."/>
            <person name="Cheuk R.F."/>
            <person name="Karlin-Newmann G."/>
            <person name="Liu S.X."/>
            <person name="Lam B."/>
            <person name="Sakano H."/>
            <person name="Wu T."/>
            <person name="Yu G."/>
            <person name="Miranda M."/>
            <person name="Quach H.L."/>
            <person name="Tripp M."/>
            <person name="Chang C.H."/>
            <person name="Lee J.M."/>
            <person name="Toriumi M.J."/>
            <person name="Chan M.M."/>
            <person name="Tang C.C."/>
            <person name="Onodera C.S."/>
            <person name="Deng J.M."/>
            <person name="Akiyama K."/>
            <person name="Ansari Y."/>
            <person name="Arakawa T."/>
            <person name="Banh J."/>
            <person name="Banno F."/>
            <person name="Bowser L."/>
            <person name="Brooks S.Y."/>
            <person name="Carninci P."/>
            <person name="Chao Q."/>
            <person name="Choy N."/>
            <person name="Enju A."/>
            <person name="Goldsmith A.D."/>
            <person name="Gurjal M."/>
            <person name="Hansen N.F."/>
            <person name="Hayashizaki Y."/>
            <person name="Johnson-Hopson C."/>
            <person name="Hsuan V.W."/>
            <person name="Iida K."/>
            <person name="Karnes M."/>
            <person name="Khan S."/>
            <person name="Koesema E."/>
            <person name="Ishida J."/>
            <person name="Jiang P.X."/>
            <person name="Jones T."/>
            <person name="Kawai J."/>
            <person name="Kamiya A."/>
            <person name="Meyers C."/>
            <person name="Nakajima M."/>
            <person name="Narusaka M."/>
            <person name="Seki M."/>
            <person name="Sakurai T."/>
            <person name="Satou M."/>
            <person name="Tamse R."/>
            <person name="Vaysberg M."/>
            <person name="Wallender E.K."/>
            <person name="Wong C."/>
            <person name="Yamamura Y."/>
            <person name="Yuan S."/>
            <person name="Shinozaki K."/>
            <person name="Davis R.W."/>
            <person name="Theologis A."/>
            <person name="Ecker J.R."/>
        </authorList>
    </citation>
    <scope>NUCLEOTIDE SEQUENCE [LARGE SCALE MRNA]</scope>
    <source>
        <strain>cv. Columbia</strain>
    </source>
</reference>
<reference key="4">
    <citation type="submission" date="2004-09" db="EMBL/GenBank/DDBJ databases">
        <title>Large-scale analysis of RIKEN Arabidopsis full-length (RAFL) cDNAs.</title>
        <authorList>
            <person name="Totoki Y."/>
            <person name="Seki M."/>
            <person name="Ishida J."/>
            <person name="Nakajima M."/>
            <person name="Enju A."/>
            <person name="Kamiya A."/>
            <person name="Narusaka M."/>
            <person name="Shin-i T."/>
            <person name="Nakagawa M."/>
            <person name="Sakamoto N."/>
            <person name="Oishi K."/>
            <person name="Kohara Y."/>
            <person name="Kobayashi M."/>
            <person name="Toyoda A."/>
            <person name="Sakaki Y."/>
            <person name="Sakurai T."/>
            <person name="Iida K."/>
            <person name="Akiyama K."/>
            <person name="Satou M."/>
            <person name="Toyoda T."/>
            <person name="Konagaya A."/>
            <person name="Carninci P."/>
            <person name="Kawai J."/>
            <person name="Hayashizaki Y."/>
            <person name="Shinozaki K."/>
        </authorList>
    </citation>
    <scope>NUCLEOTIDE SEQUENCE [LARGE SCALE MRNA]</scope>
    <source>
        <strain>cv. Columbia</strain>
    </source>
</reference>
<reference key="5">
    <citation type="journal article" date="2011" name="Plant Physiol. Biochem.">
        <title>Members of a small family of nodulin-like genes are regulated under iron deficiency in roots of Arabidopsis thaliana.</title>
        <authorList>
            <person name="Gollhofer J."/>
            <person name="Schlaewicke C."/>
            <person name="Jungnick N."/>
            <person name="Schmidt W."/>
            <person name="Buckhout T.J."/>
        </authorList>
    </citation>
    <scope>INDUCTION</scope>
</reference>
<evidence type="ECO:0000250" key="1">
    <source>
        <dbReference type="UniProtKB" id="Q9LPU9"/>
    </source>
</evidence>
<evidence type="ECO:0000255" key="2"/>
<evidence type="ECO:0000269" key="3">
    <source>
    </source>
</evidence>
<evidence type="ECO:0000303" key="4">
    <source>
    </source>
</evidence>
<evidence type="ECO:0000305" key="5"/>
<evidence type="ECO:0000312" key="6">
    <source>
        <dbReference type="Araport" id="AT3G43660"/>
    </source>
</evidence>
<evidence type="ECO:0000312" key="7">
    <source>
        <dbReference type="EMBL" id="CAB83067.1"/>
    </source>
</evidence>
<keyword id="KW-0406">Ion transport</keyword>
<keyword id="KW-0408">Iron</keyword>
<keyword id="KW-0410">Iron transport</keyword>
<keyword id="KW-0472">Membrane</keyword>
<keyword id="KW-1185">Reference proteome</keyword>
<keyword id="KW-0812">Transmembrane</keyword>
<keyword id="KW-1133">Transmembrane helix</keyword>
<keyword id="KW-0813">Transport</keyword>
<keyword id="KW-0926">Vacuole</keyword>
<name>VITH4_ARATH</name>
<proteinExistence type="evidence at transcript level"/>
<dbReference type="EMBL" id="AL138638">
    <property type="protein sequence ID" value="CAB83067.1"/>
    <property type="molecule type" value="Genomic_DNA"/>
</dbReference>
<dbReference type="EMBL" id="CP002686">
    <property type="protein sequence ID" value="AEE77816.1"/>
    <property type="molecule type" value="Genomic_DNA"/>
</dbReference>
<dbReference type="EMBL" id="BT010510">
    <property type="protein sequence ID" value="AAQ65133.1"/>
    <property type="molecule type" value="mRNA"/>
</dbReference>
<dbReference type="EMBL" id="AK176079">
    <property type="protein sequence ID" value="BAD43842.1"/>
    <property type="molecule type" value="mRNA"/>
</dbReference>
<dbReference type="PIR" id="T47402">
    <property type="entry name" value="T47402"/>
</dbReference>
<dbReference type="RefSeq" id="NP_189952.1">
    <property type="nucleotide sequence ID" value="NM_114234.2"/>
</dbReference>
<dbReference type="SMR" id="Q9M2C0"/>
<dbReference type="STRING" id="3702.Q9M2C0"/>
<dbReference type="TCDB" id="2.A.89.3.7">
    <property type="family name" value="the vacuolar iron transporter (vit) family"/>
</dbReference>
<dbReference type="GlyGen" id="Q9M2C0">
    <property type="glycosylation" value="1 site"/>
</dbReference>
<dbReference type="PaxDb" id="3702-AT3G43660.1"/>
<dbReference type="EnsemblPlants" id="AT3G43660.1">
    <property type="protein sequence ID" value="AT3G43660.1"/>
    <property type="gene ID" value="AT3G43660"/>
</dbReference>
<dbReference type="GeneID" id="823468"/>
<dbReference type="Gramene" id="AT3G43660.1">
    <property type="protein sequence ID" value="AT3G43660.1"/>
    <property type="gene ID" value="AT3G43660"/>
</dbReference>
<dbReference type="KEGG" id="ath:AT3G43660"/>
<dbReference type="Araport" id="AT3G43660"/>
<dbReference type="TAIR" id="AT3G43660"/>
<dbReference type="eggNOG" id="KOG4473">
    <property type="taxonomic scope" value="Eukaryota"/>
</dbReference>
<dbReference type="HOGENOM" id="CLU_038957_5_0_1"/>
<dbReference type="InParanoid" id="Q9M2C0"/>
<dbReference type="OMA" id="NKKMAIH"/>
<dbReference type="PhylomeDB" id="Q9M2C0"/>
<dbReference type="PRO" id="PR:Q9M2C0"/>
<dbReference type="Proteomes" id="UP000006548">
    <property type="component" value="Chromosome 3"/>
</dbReference>
<dbReference type="ExpressionAtlas" id="Q9M2C0">
    <property type="expression patterns" value="baseline and differential"/>
</dbReference>
<dbReference type="GO" id="GO:0005774">
    <property type="term" value="C:vacuolar membrane"/>
    <property type="evidence" value="ECO:0007669"/>
    <property type="project" value="UniProtKB-SubCell"/>
</dbReference>
<dbReference type="GO" id="GO:0005384">
    <property type="term" value="F:manganese ion transmembrane transporter activity"/>
    <property type="evidence" value="ECO:0007669"/>
    <property type="project" value="InterPro"/>
</dbReference>
<dbReference type="GO" id="GO:0030026">
    <property type="term" value="P:intracellular manganese ion homeostasis"/>
    <property type="evidence" value="ECO:0007669"/>
    <property type="project" value="InterPro"/>
</dbReference>
<dbReference type="GO" id="GO:0006826">
    <property type="term" value="P:iron ion transport"/>
    <property type="evidence" value="ECO:0007669"/>
    <property type="project" value="UniProtKB-KW"/>
</dbReference>
<dbReference type="CDD" id="cd02436">
    <property type="entry name" value="Nodulin-21"/>
    <property type="match status" value="1"/>
</dbReference>
<dbReference type="InterPro" id="IPR008217">
    <property type="entry name" value="Ccc1_fam"/>
</dbReference>
<dbReference type="PANTHER" id="PTHR31851">
    <property type="entry name" value="FE(2+)/MN(2+) TRANSPORTER PCL1"/>
    <property type="match status" value="1"/>
</dbReference>
<dbReference type="Pfam" id="PF01988">
    <property type="entry name" value="VIT1"/>
    <property type="match status" value="2"/>
</dbReference>
<protein>
    <recommendedName>
        <fullName evidence="5">Vacuolar iron transporter homolog 4</fullName>
    </recommendedName>
    <alternativeName>
        <fullName evidence="4">Protein NODULIN-LIKE 4</fullName>
    </alternativeName>
</protein>
<feature type="chain" id="PRO_0000411011" description="Vacuolar iron transporter homolog 4">
    <location>
        <begin position="1"/>
        <end position="198"/>
    </location>
</feature>
<feature type="topological domain" description="Cytoplasmic" evidence="2">
    <location>
        <begin position="1"/>
        <end position="32"/>
    </location>
</feature>
<feature type="transmembrane region" description="Helical" evidence="2">
    <location>
        <begin position="33"/>
        <end position="53"/>
    </location>
</feature>
<feature type="topological domain" description="Vacuolar" evidence="2">
    <location>
        <begin position="54"/>
        <end position="60"/>
    </location>
</feature>
<feature type="transmembrane region" description="Helical" evidence="2">
    <location>
        <begin position="61"/>
        <end position="81"/>
    </location>
</feature>
<feature type="topological domain" description="Cytoplasmic" evidence="2">
    <location>
        <begin position="82"/>
        <end position="114"/>
    </location>
</feature>
<feature type="transmembrane region" description="Helical" evidence="2">
    <location>
        <begin position="115"/>
        <end position="135"/>
    </location>
</feature>
<feature type="topological domain" description="Vacuolar" evidence="2">
    <location>
        <begin position="136"/>
        <end position="141"/>
    </location>
</feature>
<feature type="transmembrane region" description="Helical" evidence="2">
    <location>
        <begin position="142"/>
        <end position="162"/>
    </location>
</feature>
<feature type="topological domain" description="Cytoplasmic" evidence="2">
    <location>
        <begin position="163"/>
        <end position="174"/>
    </location>
</feature>
<feature type="transmembrane region" description="Helical" evidence="2">
    <location>
        <begin position="175"/>
        <end position="195"/>
    </location>
</feature>
<feature type="topological domain" description="Vacuolar" evidence="2">
    <location>
        <begin position="196"/>
        <end position="198"/>
    </location>
</feature>